<organism>
    <name type="scientific">Cyriopagopus schmidti</name>
    <name type="common">Chinese bird spider</name>
    <name type="synonym">Haplopelma schmidti</name>
    <dbReference type="NCBI Taxonomy" id="29017"/>
    <lineage>
        <taxon>Eukaryota</taxon>
        <taxon>Metazoa</taxon>
        <taxon>Ecdysozoa</taxon>
        <taxon>Arthropoda</taxon>
        <taxon>Chelicerata</taxon>
        <taxon>Arachnida</taxon>
        <taxon>Araneae</taxon>
        <taxon>Mygalomorphae</taxon>
        <taxon>Theraphosidae</taxon>
        <taxon>Cyriopagopus</taxon>
    </lineage>
</organism>
<sequence>MQTSMFLTLTGLVLLFVVCYASESEEKEFPKELLSSIFAADSDFKEEERGCFGYKCDYYKGCCSGYVCSPTWKWCVRPGPGRR</sequence>
<proteinExistence type="evidence at transcript level"/>
<protein>
    <recommendedName>
        <fullName>U5-theraphotoxin-Hs1b 2</fullName>
        <shortName>U5-TRTX-Hs1b</shortName>
    </recommendedName>
    <alternativeName>
        <fullName>Lectin SHL-Ib2</fullName>
    </alternativeName>
</protein>
<name>TXLB2_CYRSC</name>
<dbReference type="EMBL" id="EU195271">
    <property type="protein sequence ID" value="ABY77724.1"/>
    <property type="molecule type" value="mRNA"/>
</dbReference>
<dbReference type="ArachnoServer" id="AS000698">
    <property type="toxin name" value="U5-theraphotoxin-Hs1b"/>
</dbReference>
<dbReference type="GO" id="GO:0005576">
    <property type="term" value="C:extracellular region"/>
    <property type="evidence" value="ECO:0007669"/>
    <property type="project" value="UniProtKB-SubCell"/>
</dbReference>
<dbReference type="GO" id="GO:0030246">
    <property type="term" value="F:carbohydrate binding"/>
    <property type="evidence" value="ECO:0007669"/>
    <property type="project" value="UniProtKB-KW"/>
</dbReference>
<dbReference type="GO" id="GO:0008200">
    <property type="term" value="F:ion channel inhibitor activity"/>
    <property type="evidence" value="ECO:0007669"/>
    <property type="project" value="InterPro"/>
</dbReference>
<dbReference type="GO" id="GO:0090729">
    <property type="term" value="F:toxin activity"/>
    <property type="evidence" value="ECO:0007669"/>
    <property type="project" value="UniProtKB-KW"/>
</dbReference>
<dbReference type="InterPro" id="IPR011696">
    <property type="entry name" value="Huwentoxin-1"/>
</dbReference>
<dbReference type="Pfam" id="PF07740">
    <property type="entry name" value="Toxin_12"/>
    <property type="match status" value="1"/>
</dbReference>
<dbReference type="SUPFAM" id="SSF57059">
    <property type="entry name" value="omega toxin-like"/>
    <property type="match status" value="1"/>
</dbReference>
<comment type="function">
    <text evidence="3">Agglutinates erythrocytes.</text>
</comment>
<comment type="subcellular location">
    <subcellularLocation>
        <location evidence="1">Secreted</location>
    </subcellularLocation>
</comment>
<comment type="tissue specificity">
    <text>Expressed by the venom gland.</text>
</comment>
<comment type="domain">
    <text>The presence of a 'disulfide through disulfide knot' structurally defines this protein as a knottin.</text>
</comment>
<comment type="similarity">
    <text evidence="5">Belongs to the neurotoxin 10 (Hwtx-1) family. 51 (Hntx-8) subfamily. Hntx-8 sub-subfamily.</text>
</comment>
<keyword id="KW-0165">Cleavage on pair of basic residues</keyword>
<keyword id="KW-1015">Disulfide bond</keyword>
<keyword id="KW-0960">Knottin</keyword>
<keyword id="KW-0430">Lectin</keyword>
<keyword id="KW-0964">Secreted</keyword>
<keyword id="KW-0732">Signal</keyword>
<keyword id="KW-0800">Toxin</keyword>
<feature type="signal peptide" evidence="4">
    <location>
        <begin position="1"/>
        <end position="21"/>
    </location>
</feature>
<feature type="propeptide" id="PRO_0000380176" evidence="1">
    <location>
        <begin position="22"/>
        <end position="49"/>
    </location>
</feature>
<feature type="chain" id="PRO_0000380177" description="U5-theraphotoxin-Hs1b 2">
    <location>
        <begin position="50"/>
        <end position="81"/>
    </location>
</feature>
<feature type="disulfide bond" evidence="2">
    <location>
        <begin position="51"/>
        <end position="63"/>
    </location>
</feature>
<feature type="disulfide bond" evidence="2">
    <location>
        <begin position="56"/>
        <end position="68"/>
    </location>
</feature>
<feature type="disulfide bond" evidence="2">
    <location>
        <begin position="62"/>
        <end position="75"/>
    </location>
</feature>
<reference key="1">
    <citation type="journal article" date="2008" name="Toxicon">
        <title>Molecular diversification based on analysis of expressed sequence tags from the venom glands of the Chinese bird spider Ornithoctonus huwena.</title>
        <authorList>
            <person name="Jiang L."/>
            <person name="Peng L."/>
            <person name="Chen J."/>
            <person name="Zhang Y."/>
            <person name="Xiong X."/>
            <person name="Liang S."/>
        </authorList>
    </citation>
    <scope>NUCLEOTIDE SEQUENCE [MRNA]</scope>
    <source>
        <tissue>Venom gland</tissue>
    </source>
</reference>
<evidence type="ECO:0000250" key="1"/>
<evidence type="ECO:0000250" key="2">
    <source>
        <dbReference type="UniProtKB" id="B3FIS6"/>
    </source>
</evidence>
<evidence type="ECO:0000250" key="3">
    <source>
        <dbReference type="UniProtKB" id="Q86C51"/>
    </source>
</evidence>
<evidence type="ECO:0000255" key="4"/>
<evidence type="ECO:0000305" key="5"/>
<accession>B3FIS7</accession>